<keyword id="KW-0067">ATP-binding</keyword>
<keyword id="KW-0963">Cytoplasm</keyword>
<keyword id="KW-0235">DNA replication</keyword>
<keyword id="KW-0238">DNA-binding</keyword>
<keyword id="KW-0446">Lipid-binding</keyword>
<keyword id="KW-0547">Nucleotide-binding</keyword>
<feature type="chain" id="PRO_1000060020" description="Chromosomal replication initiator protein DnaA">
    <location>
        <begin position="1"/>
        <end position="463"/>
    </location>
</feature>
<feature type="region of interest" description="Domain I, interacts with DnaA modulators" evidence="1">
    <location>
        <begin position="1"/>
        <end position="90"/>
    </location>
</feature>
<feature type="region of interest" description="Domain II" evidence="1">
    <location>
        <begin position="91"/>
        <end position="126"/>
    </location>
</feature>
<feature type="region of interest" description="Domain III, AAA+ region" evidence="1">
    <location>
        <begin position="127"/>
        <end position="343"/>
    </location>
</feature>
<feature type="region of interest" description="Domain IV, binds dsDNA" evidence="1">
    <location>
        <begin position="344"/>
        <end position="463"/>
    </location>
</feature>
<feature type="binding site" evidence="1">
    <location>
        <position position="171"/>
    </location>
    <ligand>
        <name>ATP</name>
        <dbReference type="ChEBI" id="CHEBI:30616"/>
    </ligand>
</feature>
<feature type="binding site" evidence="1">
    <location>
        <position position="173"/>
    </location>
    <ligand>
        <name>ATP</name>
        <dbReference type="ChEBI" id="CHEBI:30616"/>
    </ligand>
</feature>
<feature type="binding site" evidence="1">
    <location>
        <position position="174"/>
    </location>
    <ligand>
        <name>ATP</name>
        <dbReference type="ChEBI" id="CHEBI:30616"/>
    </ligand>
</feature>
<feature type="binding site" evidence="1">
    <location>
        <position position="175"/>
    </location>
    <ligand>
        <name>ATP</name>
        <dbReference type="ChEBI" id="CHEBI:30616"/>
    </ligand>
</feature>
<accession>A8G7Q2</accession>
<proteinExistence type="inferred from homology"/>
<sequence>MSLSLWQQCLARLQDELPATEFSMWIRPLQAELSDNTLALYAPNRFVLDWVRDKYLNNINGLLNDFCGTDAPLLRFEVGSKPLSQIISQTVTASVSAPSAPIVRVAAPSRPSWDNAAPQPELSYRSNVNPKHTFDNFVEGKSNQLARAAARQVADNPGGAYNPLFLYGGTGLGKTHLLHAVGNGIMARKANAKVVYMHSERFVQDMVKALQNNAIEEFKRYYRSVDALLIDDIQFFANKERSQEEFFHTFNALLEGNQQIILTSDRYPKEINGVEDRLKSRFGWGLTVAIEPPELETRVAILMKKADENNIRLPGEVAFFIAKRLRSNVRELEGALNRVIANANFTGRAITIDFVREALRDLLALQEKLVTIDNIQKTVAEYYKIKIADLLSKRRSRSVARPRQMAMALAKELTNHSLPEIGDAFGGRDHTTVLHACRKIEQLREESHDIKEDFSNLIRTLSS</sequence>
<gene>
    <name evidence="1" type="primary">dnaA</name>
    <name type="ordered locus">Spro_0032</name>
</gene>
<comment type="function">
    <text evidence="1">Plays an essential role in the initiation and regulation of chromosomal replication. ATP-DnaA binds to the origin of replication (oriC) to initiate formation of the DNA replication initiation complex once per cell cycle. Binds the DnaA box (a 9 base pair repeat at the origin) and separates the double-stranded (ds)DNA. Forms a right-handed helical filament on oriC DNA; dsDNA binds to the exterior of the filament while single-stranded (ss)DNA is stabiized in the filament's interior. The ATP-DnaA-oriC complex binds and stabilizes one strand of the AT-rich DNA unwinding element (DUE), permitting loading of DNA polymerase. After initiation quickly degrades to an ADP-DnaA complex that is not apt for DNA replication. Binds acidic phospholipids.</text>
</comment>
<comment type="subunit">
    <text evidence="1">Oligomerizes as a right-handed, spiral filament on DNA at oriC.</text>
</comment>
<comment type="subcellular location">
    <subcellularLocation>
        <location evidence="1">Cytoplasm</location>
    </subcellularLocation>
</comment>
<comment type="domain">
    <text evidence="1">Domain I is involved in oligomerization and binding regulators, domain II is flexibile and of varying length in different bacteria, domain III forms the AAA+ region, while domain IV binds dsDNA.</text>
</comment>
<comment type="similarity">
    <text evidence="1">Belongs to the DnaA family.</text>
</comment>
<evidence type="ECO:0000255" key="1">
    <source>
        <dbReference type="HAMAP-Rule" id="MF_00377"/>
    </source>
</evidence>
<reference key="1">
    <citation type="submission" date="2007-09" db="EMBL/GenBank/DDBJ databases">
        <title>Complete sequence of chromosome of Serratia proteamaculans 568.</title>
        <authorList>
            <consortium name="US DOE Joint Genome Institute"/>
            <person name="Copeland A."/>
            <person name="Lucas S."/>
            <person name="Lapidus A."/>
            <person name="Barry K."/>
            <person name="Glavina del Rio T."/>
            <person name="Dalin E."/>
            <person name="Tice H."/>
            <person name="Pitluck S."/>
            <person name="Chain P."/>
            <person name="Malfatti S."/>
            <person name="Shin M."/>
            <person name="Vergez L."/>
            <person name="Schmutz J."/>
            <person name="Larimer F."/>
            <person name="Land M."/>
            <person name="Hauser L."/>
            <person name="Kyrpides N."/>
            <person name="Kim E."/>
            <person name="Taghavi S."/>
            <person name="Newman L."/>
            <person name="Vangronsveld J."/>
            <person name="van der Lelie D."/>
            <person name="Richardson P."/>
        </authorList>
    </citation>
    <scope>NUCLEOTIDE SEQUENCE [LARGE SCALE GENOMIC DNA]</scope>
    <source>
        <strain>568</strain>
    </source>
</reference>
<organism>
    <name type="scientific">Serratia proteamaculans (strain 568)</name>
    <dbReference type="NCBI Taxonomy" id="399741"/>
    <lineage>
        <taxon>Bacteria</taxon>
        <taxon>Pseudomonadati</taxon>
        <taxon>Pseudomonadota</taxon>
        <taxon>Gammaproteobacteria</taxon>
        <taxon>Enterobacterales</taxon>
        <taxon>Yersiniaceae</taxon>
        <taxon>Serratia</taxon>
    </lineage>
</organism>
<protein>
    <recommendedName>
        <fullName evidence="1">Chromosomal replication initiator protein DnaA</fullName>
    </recommendedName>
</protein>
<dbReference type="EMBL" id="CP000826">
    <property type="protein sequence ID" value="ABV39142.1"/>
    <property type="molecule type" value="Genomic_DNA"/>
</dbReference>
<dbReference type="SMR" id="A8G7Q2"/>
<dbReference type="STRING" id="399741.Spro_0032"/>
<dbReference type="KEGG" id="spe:Spro_0032"/>
<dbReference type="eggNOG" id="COG0593">
    <property type="taxonomic scope" value="Bacteria"/>
</dbReference>
<dbReference type="HOGENOM" id="CLU_026910_0_1_6"/>
<dbReference type="OrthoDB" id="9807019at2"/>
<dbReference type="GO" id="GO:0005737">
    <property type="term" value="C:cytoplasm"/>
    <property type="evidence" value="ECO:0007669"/>
    <property type="project" value="UniProtKB-SubCell"/>
</dbReference>
<dbReference type="GO" id="GO:0005886">
    <property type="term" value="C:plasma membrane"/>
    <property type="evidence" value="ECO:0007669"/>
    <property type="project" value="TreeGrafter"/>
</dbReference>
<dbReference type="GO" id="GO:0005524">
    <property type="term" value="F:ATP binding"/>
    <property type="evidence" value="ECO:0007669"/>
    <property type="project" value="UniProtKB-UniRule"/>
</dbReference>
<dbReference type="GO" id="GO:0016887">
    <property type="term" value="F:ATP hydrolysis activity"/>
    <property type="evidence" value="ECO:0007669"/>
    <property type="project" value="InterPro"/>
</dbReference>
<dbReference type="GO" id="GO:0003688">
    <property type="term" value="F:DNA replication origin binding"/>
    <property type="evidence" value="ECO:0007669"/>
    <property type="project" value="UniProtKB-UniRule"/>
</dbReference>
<dbReference type="GO" id="GO:0008289">
    <property type="term" value="F:lipid binding"/>
    <property type="evidence" value="ECO:0007669"/>
    <property type="project" value="UniProtKB-KW"/>
</dbReference>
<dbReference type="GO" id="GO:0006270">
    <property type="term" value="P:DNA replication initiation"/>
    <property type="evidence" value="ECO:0007669"/>
    <property type="project" value="UniProtKB-UniRule"/>
</dbReference>
<dbReference type="GO" id="GO:0006275">
    <property type="term" value="P:regulation of DNA replication"/>
    <property type="evidence" value="ECO:0007669"/>
    <property type="project" value="UniProtKB-UniRule"/>
</dbReference>
<dbReference type="CDD" id="cd00009">
    <property type="entry name" value="AAA"/>
    <property type="match status" value="1"/>
</dbReference>
<dbReference type="CDD" id="cd06571">
    <property type="entry name" value="Bac_DnaA_C"/>
    <property type="match status" value="1"/>
</dbReference>
<dbReference type="FunFam" id="1.10.1750.10:FF:000001">
    <property type="entry name" value="Chromosomal replication initiator protein DnaA"/>
    <property type="match status" value="1"/>
</dbReference>
<dbReference type="FunFam" id="1.10.8.60:FF:000003">
    <property type="entry name" value="Chromosomal replication initiator protein DnaA"/>
    <property type="match status" value="1"/>
</dbReference>
<dbReference type="FunFam" id="3.30.300.180:FF:000001">
    <property type="entry name" value="Chromosomal replication initiator protein DnaA"/>
    <property type="match status" value="1"/>
</dbReference>
<dbReference type="FunFam" id="3.40.50.300:FF:000103">
    <property type="entry name" value="Chromosomal replication initiator protein DnaA"/>
    <property type="match status" value="1"/>
</dbReference>
<dbReference type="Gene3D" id="1.10.1750.10">
    <property type="match status" value="1"/>
</dbReference>
<dbReference type="Gene3D" id="1.10.8.60">
    <property type="match status" value="1"/>
</dbReference>
<dbReference type="Gene3D" id="3.30.300.180">
    <property type="match status" value="1"/>
</dbReference>
<dbReference type="Gene3D" id="3.40.50.300">
    <property type="entry name" value="P-loop containing nucleotide triphosphate hydrolases"/>
    <property type="match status" value="1"/>
</dbReference>
<dbReference type="HAMAP" id="MF_00377">
    <property type="entry name" value="DnaA_bact"/>
    <property type="match status" value="1"/>
</dbReference>
<dbReference type="InterPro" id="IPR003593">
    <property type="entry name" value="AAA+_ATPase"/>
</dbReference>
<dbReference type="InterPro" id="IPR001957">
    <property type="entry name" value="Chromosome_initiator_DnaA"/>
</dbReference>
<dbReference type="InterPro" id="IPR020591">
    <property type="entry name" value="Chromosome_initiator_DnaA-like"/>
</dbReference>
<dbReference type="InterPro" id="IPR018312">
    <property type="entry name" value="Chromosome_initiator_DnaA_CS"/>
</dbReference>
<dbReference type="InterPro" id="IPR013159">
    <property type="entry name" value="DnaA_C"/>
</dbReference>
<dbReference type="InterPro" id="IPR013317">
    <property type="entry name" value="DnaA_dom"/>
</dbReference>
<dbReference type="InterPro" id="IPR024633">
    <property type="entry name" value="DnaA_N_dom"/>
</dbReference>
<dbReference type="InterPro" id="IPR038454">
    <property type="entry name" value="DnaA_N_sf"/>
</dbReference>
<dbReference type="InterPro" id="IPR027417">
    <property type="entry name" value="P-loop_NTPase"/>
</dbReference>
<dbReference type="InterPro" id="IPR010921">
    <property type="entry name" value="Trp_repressor/repl_initiator"/>
</dbReference>
<dbReference type="NCBIfam" id="TIGR00362">
    <property type="entry name" value="DnaA"/>
    <property type="match status" value="1"/>
</dbReference>
<dbReference type="PANTHER" id="PTHR30050">
    <property type="entry name" value="CHROMOSOMAL REPLICATION INITIATOR PROTEIN DNAA"/>
    <property type="match status" value="1"/>
</dbReference>
<dbReference type="PANTHER" id="PTHR30050:SF2">
    <property type="entry name" value="CHROMOSOMAL REPLICATION INITIATOR PROTEIN DNAA"/>
    <property type="match status" value="1"/>
</dbReference>
<dbReference type="Pfam" id="PF00308">
    <property type="entry name" value="Bac_DnaA"/>
    <property type="match status" value="1"/>
</dbReference>
<dbReference type="Pfam" id="PF08299">
    <property type="entry name" value="Bac_DnaA_C"/>
    <property type="match status" value="1"/>
</dbReference>
<dbReference type="Pfam" id="PF11638">
    <property type="entry name" value="DnaA_N"/>
    <property type="match status" value="1"/>
</dbReference>
<dbReference type="PRINTS" id="PR00051">
    <property type="entry name" value="DNAA"/>
</dbReference>
<dbReference type="SMART" id="SM00382">
    <property type="entry name" value="AAA"/>
    <property type="match status" value="1"/>
</dbReference>
<dbReference type="SMART" id="SM00760">
    <property type="entry name" value="Bac_DnaA_C"/>
    <property type="match status" value="1"/>
</dbReference>
<dbReference type="SUPFAM" id="SSF52540">
    <property type="entry name" value="P-loop containing nucleoside triphosphate hydrolases"/>
    <property type="match status" value="1"/>
</dbReference>
<dbReference type="SUPFAM" id="SSF48295">
    <property type="entry name" value="TrpR-like"/>
    <property type="match status" value="1"/>
</dbReference>
<dbReference type="PROSITE" id="PS01008">
    <property type="entry name" value="DNAA"/>
    <property type="match status" value="1"/>
</dbReference>
<name>DNAA_SERP5</name>